<name>MECI_STAEP</name>
<reference key="1">
    <citation type="submission" date="1990-08" db="EMBL/GenBank/DDBJ databases">
        <title>Nucleotide sequence of the methicillin resistance regulatory locus mecR of Staphylococcus epidermidis.</title>
        <authorList>
            <person name="Ryffel C."/>
            <person name="Tesch W."/>
            <person name="Kayser F.H."/>
            <person name="Berger-Baechi B."/>
        </authorList>
    </citation>
    <scope>NUCLEOTIDE SEQUENCE [GENOMIC DNA]</scope>
    <source>
        <strain>WT55</strain>
    </source>
</reference>
<reference key="2">
    <citation type="submission" date="1992-01" db="EMBL/GenBank/DDBJ databases">
        <authorList>
            <person name="Ryffel C."/>
        </authorList>
    </citation>
    <scope>SEQUENCE REVISION</scope>
</reference>
<proteinExistence type="inferred from homology"/>
<dbReference type="EMBL" id="X54660">
    <property type="protein sequence ID" value="CAA38471.1"/>
    <property type="molecule type" value="Genomic_DNA"/>
</dbReference>
<dbReference type="PIR" id="S18045">
    <property type="entry name" value="RGSAMI"/>
</dbReference>
<dbReference type="RefSeq" id="WP_000369214.1">
    <property type="nucleotide sequence ID" value="NZ_WBRV01000028.1"/>
</dbReference>
<dbReference type="SMR" id="P68263"/>
<dbReference type="CARD" id="ARO:3000124">
    <property type="molecule name" value="mecI"/>
    <property type="mechanism identifier" value="ARO:0001002"/>
    <property type="mechanism name" value="antibiotic target replacement"/>
</dbReference>
<dbReference type="GeneID" id="86196939"/>
<dbReference type="OMA" id="WSHTEIT"/>
<dbReference type="OrthoDB" id="1849040at2"/>
<dbReference type="GO" id="GO:0005737">
    <property type="term" value="C:cytoplasm"/>
    <property type="evidence" value="ECO:0007669"/>
    <property type="project" value="UniProtKB-SubCell"/>
</dbReference>
<dbReference type="GO" id="GO:0003677">
    <property type="term" value="F:DNA binding"/>
    <property type="evidence" value="ECO:0007669"/>
    <property type="project" value="UniProtKB-KW"/>
</dbReference>
<dbReference type="GO" id="GO:0045892">
    <property type="term" value="P:negative regulation of DNA-templated transcription"/>
    <property type="evidence" value="ECO:0007669"/>
    <property type="project" value="InterPro"/>
</dbReference>
<dbReference type="GO" id="GO:0046677">
    <property type="term" value="P:response to antibiotic"/>
    <property type="evidence" value="ECO:0007669"/>
    <property type="project" value="UniProtKB-KW"/>
</dbReference>
<dbReference type="Gene3D" id="1.10.4040.10">
    <property type="entry name" value="Penicillinase repressor domain"/>
    <property type="match status" value="1"/>
</dbReference>
<dbReference type="Gene3D" id="1.10.10.10">
    <property type="entry name" value="Winged helix-like DNA-binding domain superfamily/Winged helix DNA-binding domain"/>
    <property type="match status" value="1"/>
</dbReference>
<dbReference type="InterPro" id="IPR005650">
    <property type="entry name" value="BlaI_family"/>
</dbReference>
<dbReference type="InterPro" id="IPR036388">
    <property type="entry name" value="WH-like_DNA-bd_sf"/>
</dbReference>
<dbReference type="InterPro" id="IPR036390">
    <property type="entry name" value="WH_DNA-bd_sf"/>
</dbReference>
<dbReference type="NCBIfam" id="NF000243">
    <property type="entry name" value="MecI_of_mecA"/>
    <property type="match status" value="1"/>
</dbReference>
<dbReference type="Pfam" id="PF03965">
    <property type="entry name" value="Penicillinase_R"/>
    <property type="match status" value="1"/>
</dbReference>
<dbReference type="PIRSF" id="PIRSF019455">
    <property type="entry name" value="CopR_AtkY"/>
    <property type="match status" value="1"/>
</dbReference>
<dbReference type="SUPFAM" id="SSF46785">
    <property type="entry name" value="Winged helix' DNA-binding domain"/>
    <property type="match status" value="1"/>
</dbReference>
<keyword id="KW-0046">Antibiotic resistance</keyword>
<keyword id="KW-0963">Cytoplasm</keyword>
<keyword id="KW-0238">DNA-binding</keyword>
<keyword id="KW-0678">Repressor</keyword>
<keyword id="KW-0804">Transcription</keyword>
<keyword id="KW-0805">Transcription regulation</keyword>
<organism>
    <name type="scientific">Staphylococcus epidermidis</name>
    <dbReference type="NCBI Taxonomy" id="1282"/>
    <lineage>
        <taxon>Bacteria</taxon>
        <taxon>Bacillati</taxon>
        <taxon>Bacillota</taxon>
        <taxon>Bacilli</taxon>
        <taxon>Bacillales</taxon>
        <taxon>Staphylococcaceae</taxon>
        <taxon>Staphylococcus</taxon>
    </lineage>
</organism>
<accession>P68263</accession>
<accession>P26598</accession>
<feature type="chain" id="PRO_0000062800" description="Methicillin resistance regulatory protein MecI">
    <location>
        <begin position="1"/>
        <end position="123"/>
    </location>
</feature>
<feature type="DNA-binding region" description="H-T-H motif" evidence="1">
    <location>
        <begin position="7"/>
        <end position="71"/>
    </location>
</feature>
<feature type="region of interest" description="Important for dimerization" evidence="1">
    <location>
        <begin position="74"/>
        <end position="123"/>
    </location>
</feature>
<feature type="site" description="Cleavage" evidence="1">
    <location>
        <begin position="101"/>
        <end position="102"/>
    </location>
</feature>
<gene>
    <name type="primary">mecI</name>
</gene>
<protein>
    <recommendedName>
        <fullName>Methicillin resistance regulatory protein MecI</fullName>
    </recommendedName>
</protein>
<comment type="function">
    <text evidence="1">Transcriptional repressor that constitutively blocks the transcription of the gene for the penicillin-binding protein MecA. Binds DNA as a dimer (By similarity).</text>
</comment>
<comment type="subunit">
    <text evidence="1">Monomer and homodimer.</text>
</comment>
<comment type="subcellular location">
    <subcellularLocation>
        <location evidence="2">Cytoplasm</location>
    </subcellularLocation>
</comment>
<comment type="PTM">
    <text evidence="1">Upon exposure to beta-lactams, proteolytic cleavage at a single site impairs dimerization and abolishes repressor activity.</text>
</comment>
<comment type="similarity">
    <text evidence="2">Belongs to the BlaI transcriptional regulatory family.</text>
</comment>
<evidence type="ECO:0000250" key="1"/>
<evidence type="ECO:0000305" key="2"/>
<sequence length="123" mass="14790">MDNKTYEISSAEWEVMNIIWMKKYASANNIIEEIQMQKDWSPKTIRTLITRLYKKGFIDRKKDNKIFQYYSLVEESDIKYKTSKNFINKVYKGGFNSLVLNFVEKEDLSQDEIEELRNILNKK</sequence>